<gene>
    <name type="ordered locus">MIMI_R106</name>
</gene>
<protein>
    <recommendedName>
        <fullName>Uncharacterized protein R106</fullName>
    </recommendedName>
</protein>
<name>YR106_MIMIV</name>
<keyword id="KW-1185">Reference proteome</keyword>
<dbReference type="EMBL" id="AY653733">
    <property type="protein sequence ID" value="AAV50381.1"/>
    <property type="molecule type" value="Genomic_DNA"/>
</dbReference>
<dbReference type="KEGG" id="vg:9924704"/>
<dbReference type="OrthoDB" id="8942at10239"/>
<dbReference type="Proteomes" id="UP000001134">
    <property type="component" value="Genome"/>
</dbReference>
<dbReference type="Gene3D" id="3.10.310.30">
    <property type="match status" value="1"/>
</dbReference>
<dbReference type="InterPro" id="IPR038763">
    <property type="entry name" value="DHH_sf"/>
</dbReference>
<dbReference type="InterPro" id="IPR052968">
    <property type="entry name" value="Nucleotide_metab_enz"/>
</dbReference>
<dbReference type="PANTHER" id="PTHR42146">
    <property type="entry name" value="3',5'-CYCLIC-NUCLEOTIDE PHOSPHODIESTERASE"/>
    <property type="match status" value="1"/>
</dbReference>
<dbReference type="PANTHER" id="PTHR42146:SF1">
    <property type="entry name" value="OLIGORIBONUCLEASE NRNB"/>
    <property type="match status" value="1"/>
</dbReference>
<dbReference type="SUPFAM" id="SSF64182">
    <property type="entry name" value="DHH phosphoesterases"/>
    <property type="match status" value="1"/>
</dbReference>
<organismHost>
    <name type="scientific">Acanthamoeba polyphaga</name>
    <name type="common">Amoeba</name>
    <dbReference type="NCBI Taxonomy" id="5757"/>
</organismHost>
<sequence>MDNISTTVNLSDPPKNSIFNKDQVDVVLYHGYCSDGFGSAFIIWYYFKTRYGLEVADKIMYIPCYHQKDLQNFSLEFLDKIRNKNVIMCDFSYKYHLLMEIINVSNTFIVLDHHKTAQIELSKIPNDLKIFCLEKSGVGITWEYFFPDKPIPKFLAHIQDRDIWTYKVPQTSEFITYFYEQEFDFNLWETFLEEQIVDKAIDCGSKWLEYQKIIMSKIIKRTSYVIQNVNNKLSIVLYCNSPEFKSDLGNRLLYHFPFGDFSCVWDYSLYKDESYYSLRSTNDRYDVSVIATQFGGGGHRNASGLAFSGIKGCLPFEKVDDCGLLELFSQSTKGTIDLGEKHSCILFKTKEIRSEWFEQKYTDLIRRKYTNYIYLAFEISDTDKNYTVFQNDKFSLDNITKYTLDEFSKIFQPLNSINSTN</sequence>
<organism>
    <name type="scientific">Acanthamoeba polyphaga mimivirus</name>
    <name type="common">APMV</name>
    <dbReference type="NCBI Taxonomy" id="212035"/>
    <lineage>
        <taxon>Viruses</taxon>
        <taxon>Varidnaviria</taxon>
        <taxon>Bamfordvirae</taxon>
        <taxon>Nucleocytoviricota</taxon>
        <taxon>Megaviricetes</taxon>
        <taxon>Imitervirales</taxon>
        <taxon>Mimiviridae</taxon>
        <taxon>Megamimivirinae</taxon>
        <taxon>Mimivirus</taxon>
        <taxon>Mimivirus bradfordmassiliense</taxon>
    </lineage>
</organism>
<feature type="chain" id="PRO_0000071210" description="Uncharacterized protein R106">
    <location>
        <begin position="1"/>
        <end position="421"/>
    </location>
</feature>
<reference key="1">
    <citation type="journal article" date="2004" name="Science">
        <title>The 1.2-megabase genome sequence of Mimivirus.</title>
        <authorList>
            <person name="Raoult D."/>
            <person name="Audic S."/>
            <person name="Robert C."/>
            <person name="Abergel C."/>
            <person name="Renesto P."/>
            <person name="Ogata H."/>
            <person name="La Scola B."/>
            <person name="Susan M."/>
            <person name="Claverie J.-M."/>
        </authorList>
    </citation>
    <scope>NUCLEOTIDE SEQUENCE [LARGE SCALE GENOMIC DNA]</scope>
    <source>
        <strain>Rowbotham-Bradford</strain>
    </source>
</reference>
<accession>Q5UPH8</accession>
<proteinExistence type="predicted"/>